<name>FMT_MYCCT</name>
<protein>
    <recommendedName>
        <fullName evidence="1">Methionyl-tRNA formyltransferase</fullName>
        <ecNumber evidence="1">2.1.2.9</ecNumber>
    </recommendedName>
</protein>
<sequence length="317" mass="35831">MENKIKVVFCGTPKIGADVLKALIEMNEVEVVLVISQPDKPIGRKKQIVYTPVKKLALENNLKVVQPNKIGEIYDDLAKLEFDFLITCAFGQFIPTKILKLAKTDSINFHGSLLPKLRGGAPIQYAIKNGDKKTGITIMQMVKQMDAGDYYVQESIDILDSDDSGSLFEKMGQLAYSMCKKYLVDIYNHKFELIKQNENEVTFCKNISSEEEKIDWNNTSLDIFNLIRSLSPSPISYTTINSQRYKIKSSKIINLDNQNKNVAPGTIIDINRQGIVVKTLDSSLLILEIQKEGKKMILASNYYLNKLSDLKISDKFD</sequence>
<reference key="1">
    <citation type="submission" date="2005-09" db="EMBL/GenBank/DDBJ databases">
        <authorList>
            <person name="Glass J.I."/>
            <person name="Lartigue C."/>
            <person name="Pfannkoch C."/>
            <person name="Baden-Tillson H."/>
            <person name="Smith H.O."/>
            <person name="Venter J.C."/>
            <person name="Roske K."/>
            <person name="Wise K.S."/>
            <person name="Calcutt M.J."/>
            <person name="Nelson W.C."/>
            <person name="Nierman W.C."/>
        </authorList>
    </citation>
    <scope>NUCLEOTIDE SEQUENCE [LARGE SCALE GENOMIC DNA]</scope>
    <source>
        <strain>California kid / ATCC 27343 / NCTC 10154</strain>
    </source>
</reference>
<feature type="chain" id="PRO_1000020100" description="Methionyl-tRNA formyltransferase">
    <location>
        <begin position="1"/>
        <end position="317"/>
    </location>
</feature>
<feature type="binding site" evidence="1">
    <location>
        <begin position="112"/>
        <end position="115"/>
    </location>
    <ligand>
        <name>(6S)-5,6,7,8-tetrahydrofolate</name>
        <dbReference type="ChEBI" id="CHEBI:57453"/>
    </ligand>
</feature>
<dbReference type="EC" id="2.1.2.9" evidence="1"/>
<dbReference type="EMBL" id="CP000123">
    <property type="protein sequence ID" value="ABC01394.1"/>
    <property type="molecule type" value="Genomic_DNA"/>
</dbReference>
<dbReference type="RefSeq" id="WP_011387390.1">
    <property type="nucleotide sequence ID" value="NC_007633.1"/>
</dbReference>
<dbReference type="SMR" id="Q2SRX1"/>
<dbReference type="GeneID" id="23778524"/>
<dbReference type="KEGG" id="mcp:MCAP_0520"/>
<dbReference type="HOGENOM" id="CLU_033347_1_1_14"/>
<dbReference type="PhylomeDB" id="Q2SRX1"/>
<dbReference type="Proteomes" id="UP000001928">
    <property type="component" value="Chromosome"/>
</dbReference>
<dbReference type="GO" id="GO:0005829">
    <property type="term" value="C:cytosol"/>
    <property type="evidence" value="ECO:0007669"/>
    <property type="project" value="TreeGrafter"/>
</dbReference>
<dbReference type="GO" id="GO:0004479">
    <property type="term" value="F:methionyl-tRNA formyltransferase activity"/>
    <property type="evidence" value="ECO:0007669"/>
    <property type="project" value="UniProtKB-UniRule"/>
</dbReference>
<dbReference type="CDD" id="cd08646">
    <property type="entry name" value="FMT_core_Met-tRNA-FMT_N"/>
    <property type="match status" value="1"/>
</dbReference>
<dbReference type="CDD" id="cd08704">
    <property type="entry name" value="Met_tRNA_FMT_C"/>
    <property type="match status" value="1"/>
</dbReference>
<dbReference type="Gene3D" id="3.40.50.12230">
    <property type="match status" value="1"/>
</dbReference>
<dbReference type="HAMAP" id="MF_00182">
    <property type="entry name" value="Formyl_trans"/>
    <property type="match status" value="1"/>
</dbReference>
<dbReference type="InterPro" id="IPR005794">
    <property type="entry name" value="Fmt"/>
</dbReference>
<dbReference type="InterPro" id="IPR005793">
    <property type="entry name" value="Formyl_trans_C"/>
</dbReference>
<dbReference type="InterPro" id="IPR002376">
    <property type="entry name" value="Formyl_transf_N"/>
</dbReference>
<dbReference type="InterPro" id="IPR036477">
    <property type="entry name" value="Formyl_transf_N_sf"/>
</dbReference>
<dbReference type="InterPro" id="IPR011034">
    <property type="entry name" value="Formyl_transferase-like_C_sf"/>
</dbReference>
<dbReference type="InterPro" id="IPR001555">
    <property type="entry name" value="GART_AS"/>
</dbReference>
<dbReference type="InterPro" id="IPR044135">
    <property type="entry name" value="Met-tRNA-FMT_C"/>
</dbReference>
<dbReference type="InterPro" id="IPR041711">
    <property type="entry name" value="Met-tRNA-FMT_N"/>
</dbReference>
<dbReference type="NCBIfam" id="TIGR00460">
    <property type="entry name" value="fmt"/>
    <property type="match status" value="1"/>
</dbReference>
<dbReference type="PANTHER" id="PTHR11138">
    <property type="entry name" value="METHIONYL-TRNA FORMYLTRANSFERASE"/>
    <property type="match status" value="1"/>
</dbReference>
<dbReference type="PANTHER" id="PTHR11138:SF5">
    <property type="entry name" value="METHIONYL-TRNA FORMYLTRANSFERASE, MITOCHONDRIAL"/>
    <property type="match status" value="1"/>
</dbReference>
<dbReference type="Pfam" id="PF02911">
    <property type="entry name" value="Formyl_trans_C"/>
    <property type="match status" value="1"/>
</dbReference>
<dbReference type="Pfam" id="PF00551">
    <property type="entry name" value="Formyl_trans_N"/>
    <property type="match status" value="1"/>
</dbReference>
<dbReference type="SUPFAM" id="SSF50486">
    <property type="entry name" value="FMT C-terminal domain-like"/>
    <property type="match status" value="1"/>
</dbReference>
<dbReference type="SUPFAM" id="SSF53328">
    <property type="entry name" value="Formyltransferase"/>
    <property type="match status" value="1"/>
</dbReference>
<dbReference type="PROSITE" id="PS00373">
    <property type="entry name" value="GART"/>
    <property type="match status" value="1"/>
</dbReference>
<accession>Q2SRX1</accession>
<gene>
    <name evidence="1" type="primary">fmt</name>
    <name type="ordered locus">MCAP_0520</name>
</gene>
<organism>
    <name type="scientific">Mycoplasma capricolum subsp. capricolum (strain California kid / ATCC 27343 / NCTC 10154)</name>
    <dbReference type="NCBI Taxonomy" id="340047"/>
    <lineage>
        <taxon>Bacteria</taxon>
        <taxon>Bacillati</taxon>
        <taxon>Mycoplasmatota</taxon>
        <taxon>Mollicutes</taxon>
        <taxon>Mycoplasmataceae</taxon>
        <taxon>Mycoplasma</taxon>
    </lineage>
</organism>
<keyword id="KW-0648">Protein biosynthesis</keyword>
<keyword id="KW-0808">Transferase</keyword>
<evidence type="ECO:0000255" key="1">
    <source>
        <dbReference type="HAMAP-Rule" id="MF_00182"/>
    </source>
</evidence>
<proteinExistence type="inferred from homology"/>
<comment type="function">
    <text evidence="1">Attaches a formyl group to the free amino group of methionyl-tRNA(fMet). The formyl group appears to play a dual role in the initiator identity of N-formylmethionyl-tRNA by promoting its recognition by IF2 and preventing the misappropriation of this tRNA by the elongation apparatus.</text>
</comment>
<comment type="catalytic activity">
    <reaction evidence="1">
        <text>L-methionyl-tRNA(fMet) + (6R)-10-formyltetrahydrofolate = N-formyl-L-methionyl-tRNA(fMet) + (6S)-5,6,7,8-tetrahydrofolate + H(+)</text>
        <dbReference type="Rhea" id="RHEA:24380"/>
        <dbReference type="Rhea" id="RHEA-COMP:9952"/>
        <dbReference type="Rhea" id="RHEA-COMP:9953"/>
        <dbReference type="ChEBI" id="CHEBI:15378"/>
        <dbReference type="ChEBI" id="CHEBI:57453"/>
        <dbReference type="ChEBI" id="CHEBI:78530"/>
        <dbReference type="ChEBI" id="CHEBI:78844"/>
        <dbReference type="ChEBI" id="CHEBI:195366"/>
        <dbReference type="EC" id="2.1.2.9"/>
    </reaction>
</comment>
<comment type="similarity">
    <text evidence="1">Belongs to the Fmt family.</text>
</comment>